<proteinExistence type="evidence at transcript level"/>
<feature type="chain" id="PRO_0000332207" description="Myeloid-associated differentiation marker-like protein 2">
    <location>
        <begin position="1"/>
        <end position="307"/>
    </location>
</feature>
<feature type="transmembrane region" description="Helical" evidence="1">
    <location>
        <begin position="53"/>
        <end position="73"/>
    </location>
</feature>
<feature type="transmembrane region" description="Helical" evidence="1">
    <location>
        <begin position="90"/>
        <end position="110"/>
    </location>
</feature>
<feature type="transmembrane region" description="Helical" evidence="1">
    <location>
        <begin position="129"/>
        <end position="149"/>
    </location>
</feature>
<feature type="transmembrane region" description="Helical" evidence="1">
    <location>
        <begin position="163"/>
        <end position="183"/>
    </location>
</feature>
<feature type="transmembrane region" description="Helical" evidence="1">
    <location>
        <begin position="198"/>
        <end position="218"/>
    </location>
</feature>
<feature type="transmembrane region" description="Helical" evidence="1">
    <location>
        <begin position="232"/>
        <end position="252"/>
    </location>
</feature>
<feature type="transmembrane region" description="Helical" evidence="1">
    <location>
        <begin position="278"/>
        <end position="298"/>
    </location>
</feature>
<feature type="domain" description="MARVEL 1" evidence="2">
    <location>
        <begin position="17"/>
        <end position="154"/>
    </location>
</feature>
<feature type="domain" description="MARVEL 2" evidence="2">
    <location>
        <begin position="159"/>
        <end position="303"/>
    </location>
</feature>
<feature type="splice variant" id="VSP_033351" description="In isoform 2." evidence="3">
    <original>RNFRLAASVFAGLLFLAYAAEVALTRARP</original>
    <variation>APCQRPAPESPWKDDDVMTAMEYLSRHPT</variation>
    <location>
        <begin position="125"/>
        <end position="153"/>
    </location>
</feature>
<feature type="splice variant" id="VSP_033352" description="In isoform 2." evidence="3">
    <location>
        <begin position="154"/>
        <end position="307"/>
    </location>
</feature>
<feature type="sequence conflict" description="In Ref. 3; AAH91000." evidence="4" ref="3">
    <original>R</original>
    <variation>Q</variation>
    <location>
        <position position="26"/>
    </location>
</feature>
<keyword id="KW-0025">Alternative splicing</keyword>
<keyword id="KW-0472">Membrane</keyword>
<keyword id="KW-1185">Reference proteome</keyword>
<keyword id="KW-0677">Repeat</keyword>
<keyword id="KW-0812">Transmembrane</keyword>
<keyword id="KW-1133">Transmembrane helix</keyword>
<organism>
    <name type="scientific">Mus musculus</name>
    <name type="common">Mouse</name>
    <dbReference type="NCBI Taxonomy" id="10090"/>
    <lineage>
        <taxon>Eukaryota</taxon>
        <taxon>Metazoa</taxon>
        <taxon>Chordata</taxon>
        <taxon>Craniata</taxon>
        <taxon>Vertebrata</taxon>
        <taxon>Euteleostomi</taxon>
        <taxon>Mammalia</taxon>
        <taxon>Eutheria</taxon>
        <taxon>Euarchontoglires</taxon>
        <taxon>Glires</taxon>
        <taxon>Rodentia</taxon>
        <taxon>Myomorpha</taxon>
        <taxon>Muroidea</taxon>
        <taxon>Muridae</taxon>
        <taxon>Murinae</taxon>
        <taxon>Mus</taxon>
        <taxon>Mus</taxon>
    </lineage>
</organism>
<name>MADL2_MOUSE</name>
<sequence>MGSTMEPPGGAYLHLGAVTSPVGTARMLQLAFGCTTFSLVAHRGGFGGVQGTFCMAAWGFCFAFSVLVVACEFTKLHSCLRLSWGNFTAAFAMLATLLCATAAVIYPLYFTRLECPPEPAGCMVRNFRLAASVFAGLLFLAYAAEVALTRARPGQVASYMATVSGLLKIVQAFVACIIFGALVHESRYGRYVATQWCVAVYSLCFMATVAVVVLSVMGHTAGLGCPFDRLVIVYTFLAVLLYLSAAVIWPVFCFDPKYGEPGRPADCLRGSCPWDSQLVVAIFTYVNLLLYIVDLAYSQRIRFVPTL</sequence>
<evidence type="ECO:0000255" key="1"/>
<evidence type="ECO:0000255" key="2">
    <source>
        <dbReference type="PROSITE-ProRule" id="PRU00581"/>
    </source>
</evidence>
<evidence type="ECO:0000303" key="3">
    <source>
    </source>
</evidence>
<evidence type="ECO:0000305" key="4"/>
<gene>
    <name type="primary">Myadml2</name>
</gene>
<protein>
    <recommendedName>
        <fullName>Myeloid-associated differentiation marker-like protein 2</fullName>
    </recommendedName>
</protein>
<comment type="subcellular location">
    <subcellularLocation>
        <location evidence="4">Membrane</location>
        <topology evidence="4">Multi-pass membrane protein</topology>
    </subcellularLocation>
</comment>
<comment type="alternative products">
    <event type="alternative splicing"/>
    <isoform>
        <id>Q08AU7-1</id>
        <name>1</name>
        <sequence type="displayed"/>
    </isoform>
    <isoform>
        <id>Q08AU7-2</id>
        <name>2</name>
        <sequence type="described" ref="VSP_033351 VSP_033352"/>
    </isoform>
</comment>
<comment type="similarity">
    <text evidence="4">Belongs to the MAL family.</text>
</comment>
<comment type="sequence caution" evidence="4">
    <conflict type="erroneous initiation">
        <sequence resource="EMBL-CDS" id="AAH91000"/>
    </conflict>
</comment>
<comment type="sequence caution" evidence="4">
    <conflict type="erroneous initiation">
        <sequence resource="EMBL-CDS" id="AAI09330"/>
    </conflict>
</comment>
<comment type="sequence caution" evidence="4">
    <conflict type="erroneous initiation">
        <sequence resource="EMBL-CDS" id="AAI25009"/>
    </conflict>
</comment>
<dbReference type="EMBL" id="AK003645">
    <property type="protein sequence ID" value="BAB22911.1"/>
    <property type="molecule type" value="mRNA"/>
</dbReference>
<dbReference type="EMBL" id="AL663030">
    <property type="status" value="NOT_ANNOTATED_CDS"/>
    <property type="molecule type" value="Genomic_DNA"/>
</dbReference>
<dbReference type="EMBL" id="BC091000">
    <property type="protein sequence ID" value="AAH91000.1"/>
    <property type="status" value="ALT_INIT"/>
    <property type="molecule type" value="mRNA"/>
</dbReference>
<dbReference type="EMBL" id="BC109329">
    <property type="protein sequence ID" value="AAI09330.1"/>
    <property type="status" value="ALT_INIT"/>
    <property type="molecule type" value="mRNA"/>
</dbReference>
<dbReference type="EMBL" id="BC125008">
    <property type="protein sequence ID" value="AAI25009.1"/>
    <property type="status" value="ALT_INIT"/>
    <property type="molecule type" value="mRNA"/>
</dbReference>
<dbReference type="CCDS" id="CCDS56828.1">
    <molecule id="Q08AU7-2"/>
</dbReference>
<dbReference type="CCDS" id="CCDS88298.1">
    <molecule id="Q08AU7-1"/>
</dbReference>
<dbReference type="RefSeq" id="NP_001191749.1">
    <molecule id="Q08AU7-2"/>
    <property type="nucleotide sequence ID" value="NM_001204820.1"/>
</dbReference>
<dbReference type="RefSeq" id="NP_081027.1">
    <molecule id="Q08AU7-1"/>
    <property type="nucleotide sequence ID" value="NM_026751.1"/>
</dbReference>
<dbReference type="RefSeq" id="XP_017170218.1">
    <molecule id="Q08AU7-1"/>
    <property type="nucleotide sequence ID" value="XM_017314729.3"/>
</dbReference>
<dbReference type="SMR" id="Q08AU7"/>
<dbReference type="FunCoup" id="Q08AU7">
    <property type="interactions" value="386"/>
</dbReference>
<dbReference type="STRING" id="10090.ENSMUSP00000026134"/>
<dbReference type="PaxDb" id="10090-ENSMUSP00000026134"/>
<dbReference type="ProteomicsDB" id="292000">
    <molecule id="Q08AU7-1"/>
</dbReference>
<dbReference type="Antibodypedia" id="71397">
    <property type="antibodies" value="22 antibodies from 10 providers"/>
</dbReference>
<dbReference type="Ensembl" id="ENSMUST00000026134.3">
    <molecule id="Q08AU7-2"/>
    <property type="protein sequence ID" value="ENSMUSP00000026134.3"/>
    <property type="gene ID" value="ENSMUSG00000025141.4"/>
</dbReference>
<dbReference type="Ensembl" id="ENSMUST00000239158.2">
    <molecule id="Q08AU7-1"/>
    <property type="protein sequence ID" value="ENSMUSP00000158986.2"/>
    <property type="gene ID" value="ENSMUSG00000025141.4"/>
</dbReference>
<dbReference type="GeneID" id="68515"/>
<dbReference type="KEGG" id="mmu:68515"/>
<dbReference type="UCSC" id="uc007mtx.2">
    <molecule id="Q08AU7-1"/>
    <property type="organism name" value="mouse"/>
</dbReference>
<dbReference type="UCSC" id="uc029rqg.1">
    <molecule id="Q08AU7-2"/>
    <property type="organism name" value="mouse"/>
</dbReference>
<dbReference type="AGR" id="MGI:1915765"/>
<dbReference type="CTD" id="255275"/>
<dbReference type="MGI" id="MGI:1915765">
    <property type="gene designation" value="Myadml2"/>
</dbReference>
<dbReference type="VEuPathDB" id="HostDB:ENSMUSG00000025141"/>
<dbReference type="eggNOG" id="KOG4788">
    <property type="taxonomic scope" value="Eukaryota"/>
</dbReference>
<dbReference type="GeneTree" id="ENSGT00950000182933"/>
<dbReference type="HOGENOM" id="CLU_1712680_0_0_1"/>
<dbReference type="InParanoid" id="Q08AU7"/>
<dbReference type="OMA" id="HLSWGNF"/>
<dbReference type="OrthoDB" id="8737882at2759"/>
<dbReference type="BioGRID-ORCS" id="68515">
    <property type="hits" value="4 hits in 78 CRISPR screens"/>
</dbReference>
<dbReference type="PRO" id="PR:Q08AU7"/>
<dbReference type="Proteomes" id="UP000000589">
    <property type="component" value="Chromosome 11"/>
</dbReference>
<dbReference type="RNAct" id="Q08AU7">
    <property type="molecule type" value="protein"/>
</dbReference>
<dbReference type="Bgee" id="ENSMUSG00000025141">
    <property type="expression patterns" value="Expressed in hindlimb stylopod muscle and 60 other cell types or tissues"/>
</dbReference>
<dbReference type="GO" id="GO:0005737">
    <property type="term" value="C:cytoplasm"/>
    <property type="evidence" value="ECO:0007669"/>
    <property type="project" value="Ensembl"/>
</dbReference>
<dbReference type="GO" id="GO:0016020">
    <property type="term" value="C:membrane"/>
    <property type="evidence" value="ECO:0007669"/>
    <property type="project" value="UniProtKB-SubCell"/>
</dbReference>
<dbReference type="InterPro" id="IPR008253">
    <property type="entry name" value="Marvel"/>
</dbReference>
<dbReference type="InterPro" id="IPR047123">
    <property type="entry name" value="MYADM-like"/>
</dbReference>
<dbReference type="PANTHER" id="PTHR17068">
    <property type="entry name" value="MYELOID-ASSOCIATED DIFFERENTIATION MARKER MYADM FAMILY MEMBER"/>
    <property type="match status" value="1"/>
</dbReference>
<dbReference type="PANTHER" id="PTHR17068:SF5">
    <property type="entry name" value="MYELOID-ASSOCIATED DIFFERENTIATION MARKER-LIKE PROTEIN 2"/>
    <property type="match status" value="1"/>
</dbReference>
<dbReference type="Pfam" id="PF01284">
    <property type="entry name" value="MARVEL"/>
    <property type="match status" value="2"/>
</dbReference>
<dbReference type="PROSITE" id="PS51225">
    <property type="entry name" value="MARVEL"/>
    <property type="match status" value="2"/>
</dbReference>
<reference key="1">
    <citation type="journal article" date="2005" name="Science">
        <title>The transcriptional landscape of the mammalian genome.</title>
        <authorList>
            <person name="Carninci P."/>
            <person name="Kasukawa T."/>
            <person name="Katayama S."/>
            <person name="Gough J."/>
            <person name="Frith M.C."/>
            <person name="Maeda N."/>
            <person name="Oyama R."/>
            <person name="Ravasi T."/>
            <person name="Lenhard B."/>
            <person name="Wells C."/>
            <person name="Kodzius R."/>
            <person name="Shimokawa K."/>
            <person name="Bajic V.B."/>
            <person name="Brenner S.E."/>
            <person name="Batalov S."/>
            <person name="Forrest A.R."/>
            <person name="Zavolan M."/>
            <person name="Davis M.J."/>
            <person name="Wilming L.G."/>
            <person name="Aidinis V."/>
            <person name="Allen J.E."/>
            <person name="Ambesi-Impiombato A."/>
            <person name="Apweiler R."/>
            <person name="Aturaliya R.N."/>
            <person name="Bailey T.L."/>
            <person name="Bansal M."/>
            <person name="Baxter L."/>
            <person name="Beisel K.W."/>
            <person name="Bersano T."/>
            <person name="Bono H."/>
            <person name="Chalk A.M."/>
            <person name="Chiu K.P."/>
            <person name="Choudhary V."/>
            <person name="Christoffels A."/>
            <person name="Clutterbuck D.R."/>
            <person name="Crowe M.L."/>
            <person name="Dalla E."/>
            <person name="Dalrymple B.P."/>
            <person name="de Bono B."/>
            <person name="Della Gatta G."/>
            <person name="di Bernardo D."/>
            <person name="Down T."/>
            <person name="Engstrom P."/>
            <person name="Fagiolini M."/>
            <person name="Faulkner G."/>
            <person name="Fletcher C.F."/>
            <person name="Fukushima T."/>
            <person name="Furuno M."/>
            <person name="Futaki S."/>
            <person name="Gariboldi M."/>
            <person name="Georgii-Hemming P."/>
            <person name="Gingeras T.R."/>
            <person name="Gojobori T."/>
            <person name="Green R.E."/>
            <person name="Gustincich S."/>
            <person name="Harbers M."/>
            <person name="Hayashi Y."/>
            <person name="Hensch T.K."/>
            <person name="Hirokawa N."/>
            <person name="Hill D."/>
            <person name="Huminiecki L."/>
            <person name="Iacono M."/>
            <person name="Ikeo K."/>
            <person name="Iwama A."/>
            <person name="Ishikawa T."/>
            <person name="Jakt M."/>
            <person name="Kanapin A."/>
            <person name="Katoh M."/>
            <person name="Kawasawa Y."/>
            <person name="Kelso J."/>
            <person name="Kitamura H."/>
            <person name="Kitano H."/>
            <person name="Kollias G."/>
            <person name="Krishnan S.P."/>
            <person name="Kruger A."/>
            <person name="Kummerfeld S.K."/>
            <person name="Kurochkin I.V."/>
            <person name="Lareau L.F."/>
            <person name="Lazarevic D."/>
            <person name="Lipovich L."/>
            <person name="Liu J."/>
            <person name="Liuni S."/>
            <person name="McWilliam S."/>
            <person name="Madan Babu M."/>
            <person name="Madera M."/>
            <person name="Marchionni L."/>
            <person name="Matsuda H."/>
            <person name="Matsuzawa S."/>
            <person name="Miki H."/>
            <person name="Mignone F."/>
            <person name="Miyake S."/>
            <person name="Morris K."/>
            <person name="Mottagui-Tabar S."/>
            <person name="Mulder N."/>
            <person name="Nakano N."/>
            <person name="Nakauchi H."/>
            <person name="Ng P."/>
            <person name="Nilsson R."/>
            <person name="Nishiguchi S."/>
            <person name="Nishikawa S."/>
            <person name="Nori F."/>
            <person name="Ohara O."/>
            <person name="Okazaki Y."/>
            <person name="Orlando V."/>
            <person name="Pang K.C."/>
            <person name="Pavan W.J."/>
            <person name="Pavesi G."/>
            <person name="Pesole G."/>
            <person name="Petrovsky N."/>
            <person name="Piazza S."/>
            <person name="Reed J."/>
            <person name="Reid J.F."/>
            <person name="Ring B.Z."/>
            <person name="Ringwald M."/>
            <person name="Rost B."/>
            <person name="Ruan Y."/>
            <person name="Salzberg S.L."/>
            <person name="Sandelin A."/>
            <person name="Schneider C."/>
            <person name="Schoenbach C."/>
            <person name="Sekiguchi K."/>
            <person name="Semple C.A."/>
            <person name="Seno S."/>
            <person name="Sessa L."/>
            <person name="Sheng Y."/>
            <person name="Shibata Y."/>
            <person name="Shimada H."/>
            <person name="Shimada K."/>
            <person name="Silva D."/>
            <person name="Sinclair B."/>
            <person name="Sperling S."/>
            <person name="Stupka E."/>
            <person name="Sugiura K."/>
            <person name="Sultana R."/>
            <person name="Takenaka Y."/>
            <person name="Taki K."/>
            <person name="Tammoja K."/>
            <person name="Tan S.L."/>
            <person name="Tang S."/>
            <person name="Taylor M.S."/>
            <person name="Tegner J."/>
            <person name="Teichmann S.A."/>
            <person name="Ueda H.R."/>
            <person name="van Nimwegen E."/>
            <person name="Verardo R."/>
            <person name="Wei C.L."/>
            <person name="Yagi K."/>
            <person name="Yamanishi H."/>
            <person name="Zabarovsky E."/>
            <person name="Zhu S."/>
            <person name="Zimmer A."/>
            <person name="Hide W."/>
            <person name="Bult C."/>
            <person name="Grimmond S.M."/>
            <person name="Teasdale R.D."/>
            <person name="Liu E.T."/>
            <person name="Brusic V."/>
            <person name="Quackenbush J."/>
            <person name="Wahlestedt C."/>
            <person name="Mattick J.S."/>
            <person name="Hume D.A."/>
            <person name="Kai C."/>
            <person name="Sasaki D."/>
            <person name="Tomaru Y."/>
            <person name="Fukuda S."/>
            <person name="Kanamori-Katayama M."/>
            <person name="Suzuki M."/>
            <person name="Aoki J."/>
            <person name="Arakawa T."/>
            <person name="Iida J."/>
            <person name="Imamura K."/>
            <person name="Itoh M."/>
            <person name="Kato T."/>
            <person name="Kawaji H."/>
            <person name="Kawagashira N."/>
            <person name="Kawashima T."/>
            <person name="Kojima M."/>
            <person name="Kondo S."/>
            <person name="Konno H."/>
            <person name="Nakano K."/>
            <person name="Ninomiya N."/>
            <person name="Nishio T."/>
            <person name="Okada M."/>
            <person name="Plessy C."/>
            <person name="Shibata K."/>
            <person name="Shiraki T."/>
            <person name="Suzuki S."/>
            <person name="Tagami M."/>
            <person name="Waki K."/>
            <person name="Watahiki A."/>
            <person name="Okamura-Oho Y."/>
            <person name="Suzuki H."/>
            <person name="Kawai J."/>
            <person name="Hayashizaki Y."/>
        </authorList>
    </citation>
    <scope>NUCLEOTIDE SEQUENCE [LARGE SCALE MRNA] (ISOFORM 2)</scope>
    <source>
        <strain>C57BL/6J</strain>
    </source>
</reference>
<reference key="2">
    <citation type="journal article" date="2009" name="PLoS Biol.">
        <title>Lineage-specific biology revealed by a finished genome assembly of the mouse.</title>
        <authorList>
            <person name="Church D.M."/>
            <person name="Goodstadt L."/>
            <person name="Hillier L.W."/>
            <person name="Zody M.C."/>
            <person name="Goldstein S."/>
            <person name="She X."/>
            <person name="Bult C.J."/>
            <person name="Agarwala R."/>
            <person name="Cherry J.L."/>
            <person name="DiCuccio M."/>
            <person name="Hlavina W."/>
            <person name="Kapustin Y."/>
            <person name="Meric P."/>
            <person name="Maglott D."/>
            <person name="Birtle Z."/>
            <person name="Marques A.C."/>
            <person name="Graves T."/>
            <person name="Zhou S."/>
            <person name="Teague B."/>
            <person name="Potamousis K."/>
            <person name="Churas C."/>
            <person name="Place M."/>
            <person name="Herschleb J."/>
            <person name="Runnheim R."/>
            <person name="Forrest D."/>
            <person name="Amos-Landgraf J."/>
            <person name="Schwartz D.C."/>
            <person name="Cheng Z."/>
            <person name="Lindblad-Toh K."/>
            <person name="Eichler E.E."/>
            <person name="Ponting C.P."/>
        </authorList>
    </citation>
    <scope>NUCLEOTIDE SEQUENCE [LARGE SCALE GENOMIC DNA]</scope>
    <source>
        <strain>C57BL/6J</strain>
    </source>
</reference>
<reference key="3">
    <citation type="journal article" date="2004" name="Genome Res.">
        <title>The status, quality, and expansion of the NIH full-length cDNA project: the Mammalian Gene Collection (MGC).</title>
        <authorList>
            <consortium name="The MGC Project Team"/>
        </authorList>
    </citation>
    <scope>NUCLEOTIDE SEQUENCE [LARGE SCALE MRNA] (ISOFORM 1)</scope>
    <source>
        <tissue>Heart</tissue>
    </source>
</reference>
<accession>Q08AU7</accession>
<accession>Q5BKP1</accession>
<accession>Q9D1F1</accession>